<accession>Q9UW13</accession>
<accession>A0A1D8PC62</accession>
<accession>Q5AB81</accession>
<name>PALF_CANAL</name>
<sequence>MRRAVSKILPTPKLFNDSAHFHSNFRLEYNSVDDFYVQLDNPHKVWLPGEEISGQVVLISKKNLANIVITLSLVGFIKINASSHSKLRPLKHTLFDYTIKIYGKDEEEQTDSAEFSNGLLKGEHVFPFIVKLPNKRVYTSIDFGKGSINYILKAAIGNSSSYVIPASPDNASTSSLTKKKILQNPSHTSEKVISLVNPIDVSLLPRPKPKRLILKDPRTSSNKKLSRTQTSTSTINTMSSNEHDHSLPEGATPEDSDHKSLKSIPVPTIKAILEVPQRGYLRGESIPIKLSINHLRKIQDFNGIIITFVRVCRLDNGPDGVVESFRKDLQQLILPLYVDPVTFQSEINSSLRVPADAFPTILGCPLVSFQYFVEVLINLSGKSIALDSDVDARAKANPQATKSSSDKFKFNFDSTQTERSTYINTDSYKRSKKFLQLTTEIYIGTHRSSTQEEQAPQAEEVASRRSSSMASNSNSSPAVFSTSSPHSPVEHQYAGAINSIPESVAVSNFTPPYENVVPSYVPPEFVSHLQNQSELSEKERMRQHESSLLPSAPPDDEQPSPVNMTSNQQPFSFFTYQNTNTSPPVPLDDDLYQEPVDSAPNYLNVNNDRLIVPQDNNSNSET</sequence>
<evidence type="ECO:0000256" key="1">
    <source>
        <dbReference type="SAM" id="MobiDB-lite"/>
    </source>
</evidence>
<evidence type="ECO:0000269" key="2">
    <source>
    </source>
</evidence>
<evidence type="ECO:0000305" key="3"/>
<gene>
    <name type="primary">RIM8</name>
    <name type="synonym">PRR1</name>
    <name type="ordered locus">CAALFM_C100150CA</name>
    <name type="ORF">CaO19.13510</name>
    <name type="ORF">CaO19.6091</name>
</gene>
<dbReference type="EMBL" id="AF173842">
    <property type="protein sequence ID" value="AAD51715.1"/>
    <property type="status" value="ALT_FRAME"/>
    <property type="molecule type" value="Genomic_DNA"/>
</dbReference>
<dbReference type="EMBL" id="CP017623">
    <property type="protein sequence ID" value="AOW25717.1"/>
    <property type="molecule type" value="Genomic_DNA"/>
</dbReference>
<dbReference type="RefSeq" id="XP_719051.1">
    <property type="nucleotide sequence ID" value="XM_713958.1"/>
</dbReference>
<dbReference type="SMR" id="Q9UW13"/>
<dbReference type="FunCoup" id="Q9UW13">
    <property type="interactions" value="33"/>
</dbReference>
<dbReference type="STRING" id="237561.Q9UW13"/>
<dbReference type="EnsemblFungi" id="C1_00150C_A-T">
    <property type="protein sequence ID" value="C1_00150C_A-T-p1"/>
    <property type="gene ID" value="C1_00150C_A"/>
</dbReference>
<dbReference type="GeneID" id="3639342"/>
<dbReference type="KEGG" id="cal:CAALFM_C100150CA"/>
<dbReference type="CGD" id="CAL0000197201">
    <property type="gene designation" value="RIM8"/>
</dbReference>
<dbReference type="VEuPathDB" id="FungiDB:C1_00150C_A"/>
<dbReference type="eggNOG" id="ENOG502QTQN">
    <property type="taxonomic scope" value="Eukaryota"/>
</dbReference>
<dbReference type="HOGENOM" id="CLU_006001_1_0_1"/>
<dbReference type="InParanoid" id="Q9UW13"/>
<dbReference type="OMA" id="CLHGYAK"/>
<dbReference type="OrthoDB" id="7785529at2759"/>
<dbReference type="PHI-base" id="PHI:186"/>
<dbReference type="PRO" id="PR:Q9UW13"/>
<dbReference type="Proteomes" id="UP000000559">
    <property type="component" value="Chromosome 1"/>
</dbReference>
<dbReference type="GO" id="GO:0005737">
    <property type="term" value="C:cytoplasm"/>
    <property type="evidence" value="ECO:0000318"/>
    <property type="project" value="GO_Central"/>
</dbReference>
<dbReference type="GO" id="GO:0005829">
    <property type="term" value="C:cytosol"/>
    <property type="evidence" value="ECO:0000318"/>
    <property type="project" value="GO_Central"/>
</dbReference>
<dbReference type="GO" id="GO:0005886">
    <property type="term" value="C:plasma membrane"/>
    <property type="evidence" value="ECO:0000318"/>
    <property type="project" value="GO_Central"/>
</dbReference>
<dbReference type="GO" id="GO:0030674">
    <property type="term" value="F:protein-macromolecule adaptor activity"/>
    <property type="evidence" value="ECO:0000318"/>
    <property type="project" value="GO_Central"/>
</dbReference>
<dbReference type="GO" id="GO:0031625">
    <property type="term" value="F:ubiquitin protein ligase binding"/>
    <property type="evidence" value="ECO:0000318"/>
    <property type="project" value="GO_Central"/>
</dbReference>
<dbReference type="GO" id="GO:0071467">
    <property type="term" value="P:cellular response to pH"/>
    <property type="evidence" value="ECO:0000315"/>
    <property type="project" value="CGD"/>
</dbReference>
<dbReference type="GO" id="GO:0030447">
    <property type="term" value="P:filamentous growth"/>
    <property type="evidence" value="ECO:0000315"/>
    <property type="project" value="CGD"/>
</dbReference>
<dbReference type="GO" id="GO:0044182">
    <property type="term" value="P:filamentous growth of a population of unicellular organisms"/>
    <property type="evidence" value="ECO:0000315"/>
    <property type="project" value="CGD"/>
</dbReference>
<dbReference type="GO" id="GO:0036180">
    <property type="term" value="P:filamentous growth of a population of unicellular organisms in response to biotic stimulus"/>
    <property type="evidence" value="ECO:0000315"/>
    <property type="project" value="CGD"/>
</dbReference>
<dbReference type="GO" id="GO:0036177">
    <property type="term" value="P:filamentous growth of a population of unicellular organisms in response to pH"/>
    <property type="evidence" value="ECO:0000315"/>
    <property type="project" value="CGD"/>
</dbReference>
<dbReference type="GO" id="GO:0036170">
    <property type="term" value="P:filamentous growth of a population of unicellular organisms in response to starvation"/>
    <property type="evidence" value="ECO:0000315"/>
    <property type="project" value="CGD"/>
</dbReference>
<dbReference type="GO" id="GO:1900430">
    <property type="term" value="P:positive regulation of filamentous growth of a population of unicellular organisms"/>
    <property type="evidence" value="ECO:0000315"/>
    <property type="project" value="CGD"/>
</dbReference>
<dbReference type="GO" id="GO:0044409">
    <property type="term" value="P:symbiont entry into host"/>
    <property type="evidence" value="ECO:0000315"/>
    <property type="project" value="CGD"/>
</dbReference>
<dbReference type="GO" id="GO:0070086">
    <property type="term" value="P:ubiquitin-dependent endocytosis"/>
    <property type="evidence" value="ECO:0000318"/>
    <property type="project" value="GO_Central"/>
</dbReference>
<dbReference type="Gene3D" id="2.60.40.640">
    <property type="match status" value="2"/>
</dbReference>
<dbReference type="InterPro" id="IPR014752">
    <property type="entry name" value="Arrestin-like_C"/>
</dbReference>
<dbReference type="InterPro" id="IPR011021">
    <property type="entry name" value="Arrestin-like_N"/>
</dbReference>
<dbReference type="InterPro" id="IPR011022">
    <property type="entry name" value="Arrestin_C-like"/>
</dbReference>
<dbReference type="InterPro" id="IPR050357">
    <property type="entry name" value="Arrestin_domain-protein"/>
</dbReference>
<dbReference type="InterPro" id="IPR014756">
    <property type="entry name" value="Ig_E-set"/>
</dbReference>
<dbReference type="PANTHER" id="PTHR11188">
    <property type="entry name" value="ARRESTIN DOMAIN CONTAINING PROTEIN"/>
    <property type="match status" value="1"/>
</dbReference>
<dbReference type="PANTHER" id="PTHR11188:SF161">
    <property type="entry name" value="PH-RESPONSE REGULATOR PROTEIN PALF_RIM8"/>
    <property type="match status" value="1"/>
</dbReference>
<dbReference type="Pfam" id="PF02752">
    <property type="entry name" value="Arrestin_C"/>
    <property type="match status" value="1"/>
</dbReference>
<dbReference type="Pfam" id="PF00339">
    <property type="entry name" value="Arrestin_N"/>
    <property type="match status" value="1"/>
</dbReference>
<dbReference type="SMART" id="SM01017">
    <property type="entry name" value="Arrestin_C"/>
    <property type="match status" value="1"/>
</dbReference>
<dbReference type="SUPFAM" id="SSF81296">
    <property type="entry name" value="E set domains"/>
    <property type="match status" value="1"/>
</dbReference>
<comment type="function">
    <text evidence="2">Required for the proteolytic cleavage of the transcription factor RIM101 in response to alkaline ambient pH. Required for hyphal development.</text>
</comment>
<comment type="induction">
    <text evidence="2">Induced at acidic pH.</text>
</comment>
<comment type="similarity">
    <text evidence="3">Belongs to the arrestin family. PalF/RIM8 subfamily.</text>
</comment>
<comment type="sequence caution" evidence="3">
    <conflict type="frameshift">
        <sequence resource="EMBL-CDS" id="AAD51715"/>
    </conflict>
</comment>
<reference key="1">
    <citation type="journal article" date="2000" name="Mol. Cell. Biol.">
        <title>RIM101-dependent and -independent pathways govern pH responses in Candida albicans.</title>
        <authorList>
            <person name="Davis D.A."/>
            <person name="Wilson R.B."/>
            <person name="Mitchell A.P."/>
        </authorList>
    </citation>
    <scope>NUCLEOTIDE SEQUENCE [GENOMIC DNA]</scope>
    <source>
        <strain>SC5314 / CAI4 / ATCC MYA-682</strain>
    </source>
</reference>
<reference key="2">
    <citation type="journal article" date="2004" name="Proc. Natl. Acad. Sci. U.S.A.">
        <title>The diploid genome sequence of Candida albicans.</title>
        <authorList>
            <person name="Jones T."/>
            <person name="Federspiel N.A."/>
            <person name="Chibana H."/>
            <person name="Dungan J."/>
            <person name="Kalman S."/>
            <person name="Magee B.B."/>
            <person name="Newport G."/>
            <person name="Thorstenson Y.R."/>
            <person name="Agabian N."/>
            <person name="Magee P.T."/>
            <person name="Davis R.W."/>
            <person name="Scherer S."/>
        </authorList>
    </citation>
    <scope>NUCLEOTIDE SEQUENCE [LARGE SCALE GENOMIC DNA]</scope>
    <source>
        <strain>SC5314 / ATCC MYA-2876</strain>
    </source>
</reference>
<reference key="3">
    <citation type="journal article" date="2007" name="Genome Biol.">
        <title>Assembly of the Candida albicans genome into sixteen supercontigs aligned on the eight chromosomes.</title>
        <authorList>
            <person name="van het Hoog M."/>
            <person name="Rast T.J."/>
            <person name="Martchenko M."/>
            <person name="Grindle S."/>
            <person name="Dignard D."/>
            <person name="Hogues H."/>
            <person name="Cuomo C."/>
            <person name="Berriman M."/>
            <person name="Scherer S."/>
            <person name="Magee B.B."/>
            <person name="Whiteway M."/>
            <person name="Chibana H."/>
            <person name="Nantel A."/>
            <person name="Magee P.T."/>
        </authorList>
    </citation>
    <scope>GENOME REANNOTATION</scope>
    <source>
        <strain>SC5314 / ATCC MYA-2876</strain>
    </source>
</reference>
<reference key="4">
    <citation type="journal article" date="2013" name="Genome Biol.">
        <title>Assembly of a phased diploid Candida albicans genome facilitates allele-specific measurements and provides a simple model for repeat and indel structure.</title>
        <authorList>
            <person name="Muzzey D."/>
            <person name="Schwartz K."/>
            <person name="Weissman J.S."/>
            <person name="Sherlock G."/>
        </authorList>
    </citation>
    <scope>NUCLEOTIDE SEQUENCE [LARGE SCALE GENOMIC DNA]</scope>
    <scope>GENOME REANNOTATION</scope>
    <source>
        <strain>SC5314 / ATCC MYA-2876</strain>
    </source>
</reference>
<reference key="5">
    <citation type="journal article" date="1999" name="J. Bacteriol.">
        <title>PRR1, a homolog of Aspergillus nidulans palF, controls pH-dependent gene expression and filamentation in Candida albicans.</title>
        <authorList>
            <person name="Porta A."/>
            <person name="Ramon A.M."/>
            <person name="Fonzi W.A."/>
        </authorList>
    </citation>
    <scope>FUNCTION</scope>
    <scope>INDUCTION</scope>
</reference>
<protein>
    <recommendedName>
        <fullName>pH-response regulator protein palF/RIM8</fullName>
    </recommendedName>
</protein>
<feature type="chain" id="PRO_0000058186" description="pH-response regulator protein palF/RIM8">
    <location>
        <begin position="1"/>
        <end position="622"/>
    </location>
</feature>
<feature type="region of interest" description="Disordered" evidence="1">
    <location>
        <begin position="210"/>
        <end position="261"/>
    </location>
</feature>
<feature type="region of interest" description="Disordered" evidence="1">
    <location>
        <begin position="445"/>
        <end position="489"/>
    </location>
</feature>
<feature type="region of interest" description="Disordered" evidence="1">
    <location>
        <begin position="529"/>
        <end position="622"/>
    </location>
</feature>
<feature type="compositionally biased region" description="Low complexity" evidence="1">
    <location>
        <begin position="227"/>
        <end position="240"/>
    </location>
</feature>
<feature type="compositionally biased region" description="Low complexity" evidence="1">
    <location>
        <begin position="451"/>
        <end position="476"/>
    </location>
</feature>
<feature type="compositionally biased region" description="Polar residues" evidence="1">
    <location>
        <begin position="477"/>
        <end position="486"/>
    </location>
</feature>
<feature type="compositionally biased region" description="Basic and acidic residues" evidence="1">
    <location>
        <begin position="535"/>
        <end position="545"/>
    </location>
</feature>
<feature type="compositionally biased region" description="Polar residues" evidence="1">
    <location>
        <begin position="560"/>
        <end position="582"/>
    </location>
</feature>
<organism>
    <name type="scientific">Candida albicans (strain SC5314 / ATCC MYA-2876)</name>
    <name type="common">Yeast</name>
    <dbReference type="NCBI Taxonomy" id="237561"/>
    <lineage>
        <taxon>Eukaryota</taxon>
        <taxon>Fungi</taxon>
        <taxon>Dikarya</taxon>
        <taxon>Ascomycota</taxon>
        <taxon>Saccharomycotina</taxon>
        <taxon>Pichiomycetes</taxon>
        <taxon>Debaryomycetaceae</taxon>
        <taxon>Candida/Lodderomyces clade</taxon>
        <taxon>Candida</taxon>
    </lineage>
</organism>
<proteinExistence type="evidence at transcript level"/>
<keyword id="KW-1185">Reference proteome</keyword>